<keyword id="KW-0328">Glycosyltransferase</keyword>
<keyword id="KW-0479">Metal-binding</keyword>
<keyword id="KW-0671">Queuosine biosynthesis</keyword>
<keyword id="KW-1185">Reference proteome</keyword>
<keyword id="KW-0808">Transferase</keyword>
<keyword id="KW-0819">tRNA processing</keyword>
<keyword id="KW-0862">Zinc</keyword>
<name>TGT_DICNV</name>
<evidence type="ECO:0000255" key="1">
    <source>
        <dbReference type="HAMAP-Rule" id="MF_00168"/>
    </source>
</evidence>
<sequence>MNYECMTQDGRARRGRIIFDNGQIVQTPVFMPVGTQATVKGLSPEELDALGAEIILGNTFHLMLRPGAEIIQAHGGLHQFMHWQKPILTDSGGFQVFSLAKIRKLTEEGARFRSPIDGREVFLTPEKSIAVQHALNSNIIMQLDECTPYPATYDEAANSMRMSLRWARRSQQAHGDHANHLFGIVQGGIYPDLRQESAQALVELDLPGYAIGGLAVGEPKDAREATLDAVLPFVPKNKPRYLMGVGKPADLVEGVRRGIDMFDCVMPSRNARNAYLFTRFGILKLRNSRYKEDLRPIDETCNCYTCQRYSRSYLHHLDKCNEILGARLNTIHNLYYYVHLMHEMRRAIEEHRFDDFARAFYAEQECGND</sequence>
<protein>
    <recommendedName>
        <fullName evidence="1">Queuine tRNA-ribosyltransferase</fullName>
        <ecNumber evidence="1">2.4.2.29</ecNumber>
    </recommendedName>
    <alternativeName>
        <fullName evidence="1">Guanine insertion enzyme</fullName>
    </alternativeName>
    <alternativeName>
        <fullName evidence="1">tRNA-guanine transglycosylase</fullName>
    </alternativeName>
</protein>
<organism>
    <name type="scientific">Dichelobacter nodosus (strain VCS1703A)</name>
    <dbReference type="NCBI Taxonomy" id="246195"/>
    <lineage>
        <taxon>Bacteria</taxon>
        <taxon>Pseudomonadati</taxon>
        <taxon>Pseudomonadota</taxon>
        <taxon>Gammaproteobacteria</taxon>
        <taxon>Cardiobacteriales</taxon>
        <taxon>Cardiobacteriaceae</taxon>
        <taxon>Dichelobacter</taxon>
    </lineage>
</organism>
<gene>
    <name evidence="1" type="primary">tgt</name>
    <name type="ordered locus">DNO_0319</name>
</gene>
<accession>A5EW66</accession>
<proteinExistence type="inferred from homology"/>
<reference key="1">
    <citation type="journal article" date="2007" name="Nat. Biotechnol.">
        <title>Genome sequence and identification of candidate vaccine antigens from the animal pathogen Dichelobacter nodosus.</title>
        <authorList>
            <person name="Myers G.S.A."/>
            <person name="Parker D."/>
            <person name="Al-Hasani K."/>
            <person name="Kennan R.M."/>
            <person name="Seemann T."/>
            <person name="Ren Q."/>
            <person name="Badger J.H."/>
            <person name="Selengut J.D."/>
            <person name="Deboy R.T."/>
            <person name="Tettelin H."/>
            <person name="Boyce J.D."/>
            <person name="McCarl V.P."/>
            <person name="Han X."/>
            <person name="Nelson W.C."/>
            <person name="Madupu R."/>
            <person name="Mohamoud Y."/>
            <person name="Holley T."/>
            <person name="Fedorova N."/>
            <person name="Khouri H."/>
            <person name="Bottomley S.P."/>
            <person name="Whittington R.J."/>
            <person name="Adler B."/>
            <person name="Songer J.G."/>
            <person name="Rood J.I."/>
            <person name="Paulsen I.T."/>
        </authorList>
    </citation>
    <scope>NUCLEOTIDE SEQUENCE [LARGE SCALE GENOMIC DNA]</scope>
    <source>
        <strain>VCS1703A</strain>
    </source>
</reference>
<comment type="function">
    <text evidence="1">Catalyzes the base-exchange of a guanine (G) residue with the queuine precursor 7-aminomethyl-7-deazaguanine (PreQ1) at position 34 (anticodon wobble position) in tRNAs with GU(N) anticodons (tRNA-Asp, -Asn, -His and -Tyr). Catalysis occurs through a double-displacement mechanism. The nucleophile active site attacks the C1' of nucleotide 34 to detach the guanine base from the RNA, forming a covalent enzyme-RNA intermediate. The proton acceptor active site deprotonates the incoming PreQ1, allowing a nucleophilic attack on the C1' of the ribose to form the product. After dissociation, two additional enzymatic reactions on the tRNA convert PreQ1 to queuine (Q), resulting in the hypermodified nucleoside queuosine (7-(((4,5-cis-dihydroxy-2-cyclopenten-1-yl)amino)methyl)-7-deazaguanosine).</text>
</comment>
<comment type="catalytic activity">
    <reaction evidence="1">
        <text>7-aminomethyl-7-carbaguanine + guanosine(34) in tRNA = 7-aminomethyl-7-carbaguanosine(34) in tRNA + guanine</text>
        <dbReference type="Rhea" id="RHEA:24104"/>
        <dbReference type="Rhea" id="RHEA-COMP:10341"/>
        <dbReference type="Rhea" id="RHEA-COMP:10342"/>
        <dbReference type="ChEBI" id="CHEBI:16235"/>
        <dbReference type="ChEBI" id="CHEBI:58703"/>
        <dbReference type="ChEBI" id="CHEBI:74269"/>
        <dbReference type="ChEBI" id="CHEBI:82833"/>
        <dbReference type="EC" id="2.4.2.29"/>
    </reaction>
</comment>
<comment type="cofactor">
    <cofactor evidence="1">
        <name>Zn(2+)</name>
        <dbReference type="ChEBI" id="CHEBI:29105"/>
    </cofactor>
    <text evidence="1">Binds 1 zinc ion per subunit.</text>
</comment>
<comment type="pathway">
    <text evidence="1">tRNA modification; tRNA-queuosine biosynthesis.</text>
</comment>
<comment type="subunit">
    <text evidence="1">Homodimer. Within each dimer, one monomer is responsible for RNA recognition and catalysis, while the other monomer binds to the replacement base PreQ1.</text>
</comment>
<comment type="similarity">
    <text evidence="1">Belongs to the queuine tRNA-ribosyltransferase family.</text>
</comment>
<dbReference type="EC" id="2.4.2.29" evidence="1"/>
<dbReference type="EMBL" id="CP000513">
    <property type="protein sequence ID" value="ABQ13409.1"/>
    <property type="molecule type" value="Genomic_DNA"/>
</dbReference>
<dbReference type="RefSeq" id="WP_012030663.1">
    <property type="nucleotide sequence ID" value="NC_009446.1"/>
</dbReference>
<dbReference type="SMR" id="A5EW66"/>
<dbReference type="STRING" id="246195.DNO_0319"/>
<dbReference type="KEGG" id="dno:DNO_0319"/>
<dbReference type="eggNOG" id="COG0343">
    <property type="taxonomic scope" value="Bacteria"/>
</dbReference>
<dbReference type="HOGENOM" id="CLU_022060_0_1_6"/>
<dbReference type="UniPathway" id="UPA00392"/>
<dbReference type="Proteomes" id="UP000000248">
    <property type="component" value="Chromosome"/>
</dbReference>
<dbReference type="GO" id="GO:0005829">
    <property type="term" value="C:cytosol"/>
    <property type="evidence" value="ECO:0007669"/>
    <property type="project" value="TreeGrafter"/>
</dbReference>
<dbReference type="GO" id="GO:0046872">
    <property type="term" value="F:metal ion binding"/>
    <property type="evidence" value="ECO:0007669"/>
    <property type="project" value="UniProtKB-KW"/>
</dbReference>
<dbReference type="GO" id="GO:0008479">
    <property type="term" value="F:tRNA-guanosine(34) queuine transglycosylase activity"/>
    <property type="evidence" value="ECO:0007669"/>
    <property type="project" value="UniProtKB-UniRule"/>
</dbReference>
<dbReference type="GO" id="GO:0008616">
    <property type="term" value="P:queuosine biosynthetic process"/>
    <property type="evidence" value="ECO:0007669"/>
    <property type="project" value="UniProtKB-UniRule"/>
</dbReference>
<dbReference type="GO" id="GO:0002099">
    <property type="term" value="P:tRNA wobble guanine modification"/>
    <property type="evidence" value="ECO:0007669"/>
    <property type="project" value="TreeGrafter"/>
</dbReference>
<dbReference type="GO" id="GO:0101030">
    <property type="term" value="P:tRNA-guanine transglycosylation"/>
    <property type="evidence" value="ECO:0007669"/>
    <property type="project" value="InterPro"/>
</dbReference>
<dbReference type="FunFam" id="3.20.20.105:FF:000001">
    <property type="entry name" value="Queuine tRNA-ribosyltransferase"/>
    <property type="match status" value="1"/>
</dbReference>
<dbReference type="Gene3D" id="3.20.20.105">
    <property type="entry name" value="Queuine tRNA-ribosyltransferase-like"/>
    <property type="match status" value="1"/>
</dbReference>
<dbReference type="HAMAP" id="MF_00168">
    <property type="entry name" value="Q_tRNA_Tgt"/>
    <property type="match status" value="1"/>
</dbReference>
<dbReference type="InterPro" id="IPR050076">
    <property type="entry name" value="ArchSynthase1/Queuine_TRR"/>
</dbReference>
<dbReference type="InterPro" id="IPR004803">
    <property type="entry name" value="TGT"/>
</dbReference>
<dbReference type="InterPro" id="IPR036511">
    <property type="entry name" value="TGT-like_sf"/>
</dbReference>
<dbReference type="InterPro" id="IPR002616">
    <property type="entry name" value="tRNA_ribo_trans-like"/>
</dbReference>
<dbReference type="NCBIfam" id="TIGR00430">
    <property type="entry name" value="Q_tRNA_tgt"/>
    <property type="match status" value="1"/>
</dbReference>
<dbReference type="NCBIfam" id="TIGR00449">
    <property type="entry name" value="tgt_general"/>
    <property type="match status" value="1"/>
</dbReference>
<dbReference type="PANTHER" id="PTHR46499">
    <property type="entry name" value="QUEUINE TRNA-RIBOSYLTRANSFERASE"/>
    <property type="match status" value="1"/>
</dbReference>
<dbReference type="PANTHER" id="PTHR46499:SF1">
    <property type="entry name" value="QUEUINE TRNA-RIBOSYLTRANSFERASE"/>
    <property type="match status" value="1"/>
</dbReference>
<dbReference type="Pfam" id="PF01702">
    <property type="entry name" value="TGT"/>
    <property type="match status" value="1"/>
</dbReference>
<dbReference type="SUPFAM" id="SSF51713">
    <property type="entry name" value="tRNA-guanine transglycosylase"/>
    <property type="match status" value="1"/>
</dbReference>
<feature type="chain" id="PRO_1000016786" description="Queuine tRNA-ribosyltransferase">
    <location>
        <begin position="1"/>
        <end position="369"/>
    </location>
</feature>
<feature type="region of interest" description="RNA binding" evidence="1">
    <location>
        <begin position="244"/>
        <end position="250"/>
    </location>
</feature>
<feature type="active site" description="Proton acceptor" evidence="1">
    <location>
        <position position="90"/>
    </location>
</feature>
<feature type="active site" description="Nucleophile" evidence="1">
    <location>
        <position position="263"/>
    </location>
</feature>
<feature type="binding site" evidence="1">
    <location>
        <begin position="90"/>
        <end position="94"/>
    </location>
    <ligand>
        <name>substrate</name>
    </ligand>
</feature>
<feature type="binding site" evidence="1">
    <location>
        <position position="144"/>
    </location>
    <ligand>
        <name>substrate</name>
    </ligand>
</feature>
<feature type="binding site" evidence="1">
    <location>
        <position position="186"/>
    </location>
    <ligand>
        <name>substrate</name>
    </ligand>
</feature>
<feature type="binding site" evidence="1">
    <location>
        <position position="213"/>
    </location>
    <ligand>
        <name>substrate</name>
    </ligand>
</feature>
<feature type="binding site" evidence="1">
    <location>
        <position position="301"/>
    </location>
    <ligand>
        <name>Zn(2+)</name>
        <dbReference type="ChEBI" id="CHEBI:29105"/>
    </ligand>
</feature>
<feature type="binding site" evidence="1">
    <location>
        <position position="303"/>
    </location>
    <ligand>
        <name>Zn(2+)</name>
        <dbReference type="ChEBI" id="CHEBI:29105"/>
    </ligand>
</feature>
<feature type="binding site" evidence="1">
    <location>
        <position position="306"/>
    </location>
    <ligand>
        <name>Zn(2+)</name>
        <dbReference type="ChEBI" id="CHEBI:29105"/>
    </ligand>
</feature>
<feature type="binding site" evidence="1">
    <location>
        <position position="332"/>
    </location>
    <ligand>
        <name>Zn(2+)</name>
        <dbReference type="ChEBI" id="CHEBI:29105"/>
    </ligand>
</feature>